<reference key="1">
    <citation type="journal article" date="1996" name="J. Neurosci.">
        <title>Retina-derived POU-domain factor-1: a complex POU-domain gene implicated in the development of retinal ganglion and amacrine cells.</title>
        <authorList>
            <person name="Zhou H."/>
            <person name="Yoshioka T."/>
            <person name="Nathans J."/>
        </authorList>
    </citation>
    <scope>NUCLEOTIDE SEQUENCE [GENOMIC DNA / MRNA] (ISOFORMS 1 AND 2)</scope>
    <scope>TISSUE SPECIFICITY</scope>
    <source>
        <tissue>Retina</tissue>
    </source>
</reference>
<reference key="2">
    <citation type="journal article" date="2003" name="Nature">
        <title>The DNA sequence of human chromosome 7.</title>
        <authorList>
            <person name="Hillier L.W."/>
            <person name="Fulton R.S."/>
            <person name="Fulton L.A."/>
            <person name="Graves T.A."/>
            <person name="Pepin K.H."/>
            <person name="Wagner-McPherson C."/>
            <person name="Layman D."/>
            <person name="Maas J."/>
            <person name="Jaeger S."/>
            <person name="Walker R."/>
            <person name="Wylie K."/>
            <person name="Sekhon M."/>
            <person name="Becker M.C."/>
            <person name="O'Laughlin M.D."/>
            <person name="Schaller M.E."/>
            <person name="Fewell G.A."/>
            <person name="Delehaunty K.D."/>
            <person name="Miner T.L."/>
            <person name="Nash W.E."/>
            <person name="Cordes M."/>
            <person name="Du H."/>
            <person name="Sun H."/>
            <person name="Edwards J."/>
            <person name="Bradshaw-Cordum H."/>
            <person name="Ali J."/>
            <person name="Andrews S."/>
            <person name="Isak A."/>
            <person name="Vanbrunt A."/>
            <person name="Nguyen C."/>
            <person name="Du F."/>
            <person name="Lamar B."/>
            <person name="Courtney L."/>
            <person name="Kalicki J."/>
            <person name="Ozersky P."/>
            <person name="Bielicki L."/>
            <person name="Scott K."/>
            <person name="Holmes A."/>
            <person name="Harkins R."/>
            <person name="Harris A."/>
            <person name="Strong C.M."/>
            <person name="Hou S."/>
            <person name="Tomlinson C."/>
            <person name="Dauphin-Kohlberg S."/>
            <person name="Kozlowicz-Reilly A."/>
            <person name="Leonard S."/>
            <person name="Rohlfing T."/>
            <person name="Rock S.M."/>
            <person name="Tin-Wollam A.-M."/>
            <person name="Abbott A."/>
            <person name="Minx P."/>
            <person name="Maupin R."/>
            <person name="Strowmatt C."/>
            <person name="Latreille P."/>
            <person name="Miller N."/>
            <person name="Johnson D."/>
            <person name="Murray J."/>
            <person name="Woessner J.P."/>
            <person name="Wendl M.C."/>
            <person name="Yang S.-P."/>
            <person name="Schultz B.R."/>
            <person name="Wallis J.W."/>
            <person name="Spieth J."/>
            <person name="Bieri T.A."/>
            <person name="Nelson J.O."/>
            <person name="Berkowicz N."/>
            <person name="Wohldmann P.E."/>
            <person name="Cook L.L."/>
            <person name="Hickenbotham M.T."/>
            <person name="Eldred J."/>
            <person name="Williams D."/>
            <person name="Bedell J.A."/>
            <person name="Mardis E.R."/>
            <person name="Clifton S.W."/>
            <person name="Chissoe S.L."/>
            <person name="Marra M.A."/>
            <person name="Raymond C."/>
            <person name="Haugen E."/>
            <person name="Gillett W."/>
            <person name="Zhou Y."/>
            <person name="James R."/>
            <person name="Phelps K."/>
            <person name="Iadanoto S."/>
            <person name="Bubb K."/>
            <person name="Simms E."/>
            <person name="Levy R."/>
            <person name="Clendenning J."/>
            <person name="Kaul R."/>
            <person name="Kent W.J."/>
            <person name="Furey T.S."/>
            <person name="Baertsch R.A."/>
            <person name="Brent M.R."/>
            <person name="Keibler E."/>
            <person name="Flicek P."/>
            <person name="Bork P."/>
            <person name="Suyama M."/>
            <person name="Bailey J.A."/>
            <person name="Portnoy M.E."/>
            <person name="Torrents D."/>
            <person name="Chinwalla A.T."/>
            <person name="Gish W.R."/>
            <person name="Eddy S.R."/>
            <person name="McPherson J.D."/>
            <person name="Olson M.V."/>
            <person name="Eichler E.E."/>
            <person name="Green E.D."/>
            <person name="Waterston R.H."/>
            <person name="Wilson R.K."/>
        </authorList>
    </citation>
    <scope>NUCLEOTIDE SEQUENCE [LARGE SCALE GENOMIC DNA]</scope>
</reference>
<reference key="3">
    <citation type="journal article" date="2003" name="Science">
        <title>Human chromosome 7: DNA sequence and biology.</title>
        <authorList>
            <person name="Scherer S.W."/>
            <person name="Cheung J."/>
            <person name="MacDonald J.R."/>
            <person name="Osborne L.R."/>
            <person name="Nakabayashi K."/>
            <person name="Herbrick J.-A."/>
            <person name="Carson A.R."/>
            <person name="Parker-Katiraee L."/>
            <person name="Skaug J."/>
            <person name="Khaja R."/>
            <person name="Zhang J."/>
            <person name="Hudek A.K."/>
            <person name="Li M."/>
            <person name="Haddad M."/>
            <person name="Duggan G.E."/>
            <person name="Fernandez B.A."/>
            <person name="Kanematsu E."/>
            <person name="Gentles S."/>
            <person name="Christopoulos C.C."/>
            <person name="Choufani S."/>
            <person name="Kwasnicka D."/>
            <person name="Zheng X.H."/>
            <person name="Lai Z."/>
            <person name="Nusskern D.R."/>
            <person name="Zhang Q."/>
            <person name="Gu Z."/>
            <person name="Lu F."/>
            <person name="Zeesman S."/>
            <person name="Nowaczyk M.J."/>
            <person name="Teshima I."/>
            <person name="Chitayat D."/>
            <person name="Shuman C."/>
            <person name="Weksberg R."/>
            <person name="Zackai E.H."/>
            <person name="Grebe T.A."/>
            <person name="Cox S.R."/>
            <person name="Kirkpatrick S.J."/>
            <person name="Rahman N."/>
            <person name="Friedman J.M."/>
            <person name="Heng H.H.Q."/>
            <person name="Pelicci P.G."/>
            <person name="Lo-Coco F."/>
            <person name="Belloni E."/>
            <person name="Shaffer L.G."/>
            <person name="Pober B."/>
            <person name="Morton C.C."/>
            <person name="Gusella J.F."/>
            <person name="Bruns G.A.P."/>
            <person name="Korf B.R."/>
            <person name="Quade B.J."/>
            <person name="Ligon A.H."/>
            <person name="Ferguson H."/>
            <person name="Higgins A.W."/>
            <person name="Leach N.T."/>
            <person name="Herrick S.R."/>
            <person name="Lemyre E."/>
            <person name="Farra C.G."/>
            <person name="Kim H.-G."/>
            <person name="Summers A.M."/>
            <person name="Gripp K.W."/>
            <person name="Roberts W."/>
            <person name="Szatmari P."/>
            <person name="Winsor E.J.T."/>
            <person name="Grzeschik K.-H."/>
            <person name="Teebi A."/>
            <person name="Minassian B.A."/>
            <person name="Kere J."/>
            <person name="Armengol L."/>
            <person name="Pujana M.A."/>
            <person name="Estivill X."/>
            <person name="Wilson M.D."/>
            <person name="Koop B.F."/>
            <person name="Tosi S."/>
            <person name="Moore G.E."/>
            <person name="Boright A.P."/>
            <person name="Zlotorynski E."/>
            <person name="Kerem B."/>
            <person name="Kroisel P.M."/>
            <person name="Petek E."/>
            <person name="Oscier D.G."/>
            <person name="Mould S.J."/>
            <person name="Doehner H."/>
            <person name="Doehner K."/>
            <person name="Rommens J.M."/>
            <person name="Vincent J.B."/>
            <person name="Venter J.C."/>
            <person name="Li P.W."/>
            <person name="Mural R.J."/>
            <person name="Adams M.D."/>
            <person name="Tsui L.-C."/>
        </authorList>
    </citation>
    <scope>NUCLEOTIDE SEQUENCE [LARGE SCALE GENOMIC DNA]</scope>
</reference>
<reference key="4">
    <citation type="journal article" date="2001" name="Genes Chromosomes Cancer">
        <title>Refinement within single yeast artificial chromosome clones of a minimal region commonly deleted on the short arm of chromosome 7 in Wilms tumours.</title>
        <authorList>
            <person name="Perotti D."/>
            <person name="Testi M.A."/>
            <person name="Mondini P."/>
            <person name="Pilotti S."/>
            <person name="Green E.D."/>
            <person name="Pession A."/>
            <person name="Sozzi G."/>
            <person name="Pierotti M.A."/>
            <person name="Fossati-Bellani F."/>
            <person name="Radice P."/>
        </authorList>
    </citation>
    <scope>VARIANT WT5 HIS-192</scope>
</reference>
<protein>
    <recommendedName>
        <fullName>POU domain, class 6, transcription factor 2</fullName>
    </recommendedName>
    <alternativeName>
        <fullName>Retina-derived POU domain factor 1</fullName>
        <shortName>RPF-1</shortName>
    </alternativeName>
</protein>
<keyword id="KW-0025">Alternative splicing</keyword>
<keyword id="KW-0225">Disease variant</keyword>
<keyword id="KW-0238">DNA-binding</keyword>
<keyword id="KW-0371">Homeobox</keyword>
<keyword id="KW-0539">Nucleus</keyword>
<keyword id="KW-1267">Proteomics identification</keyword>
<keyword id="KW-1185">Reference proteome</keyword>
<keyword id="KW-0804">Transcription</keyword>
<keyword id="KW-0805">Transcription regulation</keyword>
<sequence>MSALLQDPMIAGQVSKPLLSVRSEMNAELRGEDKAATSDSELNEPLLAPVESNDSEDTPSKLFGARGNPALSDPGTPDQHQASQTHPPFPVGPQPLLTAQQLASAVAGVMPGGPPALNQPILIPFNMAGQLGGQQGLVLTLPTANLTNIQGLVAAAAAGGIMTLPLQNLQATSSLNSQLQQLQLQLQQQQQQQQQQPPPSTNQHPQPAPQAPSQSQQQPLQPTPPQQPPPASQQPPAPTSQLQQAPQPQQHQPHSHSQNQNQPSPTQQSSSPPQKPSQSPGHGLPSPLTPPNPLQLVNNPLASQAAAAAAAMSSIASSQAFGNALSSLQGVTGQLVTNAQGQIIGTIPLMPNPGPSSQAASGTQGLQVQPITPQLLTNAQGQIIATVIGNQILPVINTQGITLSPIKPGQQLHQPSQTSVGQAASQGNLLHLAHSQASMSQSPVRQASSSSSSSSSSSALSVGQLVSNPQTAAGEVDGVNLEEIREFAKAFKIRRLSLGLTQTQVGQALSATEGPAYSQSAICRHTILRSHFFLPQEAQENTIASSLTAKLNPGLLYPARFEKLDITPKSAQKIKPVLERWMAEAEARHRAGMQNLTEFIGSEPSKKRKRRTSFTPQALEILNAHFEKNTHPSGQEMTEIAEKLNYDREVVRVWFCNKRQALKNTIKRLKQHEPATAVPLEPLTDSLEENS</sequence>
<evidence type="ECO:0000255" key="1">
    <source>
        <dbReference type="PROSITE-ProRule" id="PRU00108"/>
    </source>
</evidence>
<evidence type="ECO:0000255" key="2">
    <source>
        <dbReference type="PROSITE-ProRule" id="PRU00530"/>
    </source>
</evidence>
<evidence type="ECO:0000256" key="3">
    <source>
        <dbReference type="SAM" id="MobiDB-lite"/>
    </source>
</evidence>
<evidence type="ECO:0000269" key="4">
    <source>
    </source>
</evidence>
<evidence type="ECO:0000269" key="5">
    <source>
    </source>
</evidence>
<evidence type="ECO:0000303" key="6">
    <source>
    </source>
</evidence>
<evidence type="ECO:0000305" key="7"/>
<dbReference type="EMBL" id="U91934">
    <property type="protein sequence ID" value="AAB49727.1"/>
    <property type="status" value="ALT_SEQ"/>
    <property type="molecule type" value="Genomic_DNA"/>
</dbReference>
<dbReference type="EMBL" id="U91935">
    <property type="protein sequence ID" value="AAB49728.1"/>
    <property type="status" value="ALT_INIT"/>
    <property type="molecule type" value="mRNA"/>
</dbReference>
<dbReference type="EMBL" id="AC005483">
    <property type="protein sequence ID" value="AAC83404.2"/>
    <property type="molecule type" value="Genomic_DNA"/>
</dbReference>
<dbReference type="EMBL" id="AC073345">
    <property type="protein sequence ID" value="AAS07475.1"/>
    <property type="status" value="ALT_INIT"/>
    <property type="molecule type" value="Genomic_DNA"/>
</dbReference>
<dbReference type="EMBL" id="AC092174">
    <property type="protein sequence ID" value="AAP21873.1"/>
    <property type="molecule type" value="Genomic_DNA"/>
</dbReference>
<dbReference type="EMBL" id="AC011292">
    <property type="status" value="NOT_ANNOTATED_CDS"/>
    <property type="molecule type" value="Genomic_DNA"/>
</dbReference>
<dbReference type="EMBL" id="CH236951">
    <property type="protein sequence ID" value="EAL23992.1"/>
    <property type="status" value="ALT_SEQ"/>
    <property type="molecule type" value="Genomic_DNA"/>
</dbReference>
<dbReference type="RefSeq" id="NP_001159490.1">
    <molecule id="P78424-2"/>
    <property type="nucleotide sequence ID" value="NM_001166018.2"/>
</dbReference>
<dbReference type="RefSeq" id="NP_009183.3">
    <molecule id="P78424-1"/>
    <property type="nucleotide sequence ID" value="NM_007252.4"/>
</dbReference>
<dbReference type="SMR" id="P78424"/>
<dbReference type="BioGRID" id="116437">
    <property type="interactions" value="247"/>
</dbReference>
<dbReference type="FunCoup" id="P78424">
    <property type="interactions" value="271"/>
</dbReference>
<dbReference type="IntAct" id="P78424">
    <property type="interactions" value="141"/>
</dbReference>
<dbReference type="STRING" id="9606.ENSP00000384004"/>
<dbReference type="GlyGen" id="P78424">
    <property type="glycosylation" value="5 sites"/>
</dbReference>
<dbReference type="iPTMnet" id="P78424"/>
<dbReference type="PhosphoSitePlus" id="P78424"/>
<dbReference type="BioMuta" id="POU6F2"/>
<dbReference type="DMDM" id="327478564"/>
<dbReference type="MassIVE" id="P78424"/>
<dbReference type="PaxDb" id="9606-ENSP00000384004"/>
<dbReference type="PeptideAtlas" id="P78424"/>
<dbReference type="ProteomicsDB" id="57623">
    <molecule id="P78424-1"/>
</dbReference>
<dbReference type="ProteomicsDB" id="57624">
    <molecule id="P78424-2"/>
</dbReference>
<dbReference type="Antibodypedia" id="1767">
    <property type="antibodies" value="207 antibodies from 26 providers"/>
</dbReference>
<dbReference type="DNASU" id="11281"/>
<dbReference type="Ensembl" id="ENST00000403058.6">
    <molecule id="P78424-1"/>
    <property type="protein sequence ID" value="ENSP00000384004.1"/>
    <property type="gene ID" value="ENSG00000106536.21"/>
</dbReference>
<dbReference type="GeneID" id="11281"/>
<dbReference type="KEGG" id="hsa:11281"/>
<dbReference type="UCSC" id="uc003thb.3">
    <molecule id="P78424-1"/>
    <property type="organism name" value="human"/>
</dbReference>
<dbReference type="AGR" id="HGNC:21694"/>
<dbReference type="CTD" id="11281"/>
<dbReference type="DisGeNET" id="11281"/>
<dbReference type="GeneCards" id="POU6F2"/>
<dbReference type="HGNC" id="HGNC:21694">
    <property type="gene designation" value="POU6F2"/>
</dbReference>
<dbReference type="HPA" id="ENSG00000106536">
    <property type="expression patterns" value="Tissue enhanced (brain)"/>
</dbReference>
<dbReference type="MalaCards" id="POU6F2"/>
<dbReference type="MIM" id="601583">
    <property type="type" value="phenotype"/>
</dbReference>
<dbReference type="MIM" id="609062">
    <property type="type" value="gene"/>
</dbReference>
<dbReference type="neXtProt" id="NX_P78424"/>
<dbReference type="OpenTargets" id="ENSG00000106536"/>
<dbReference type="Orphanet" id="654">
    <property type="disease" value="Nephroblastoma"/>
</dbReference>
<dbReference type="PharmGKB" id="PA134969420"/>
<dbReference type="VEuPathDB" id="HostDB:ENSG00000106536"/>
<dbReference type="eggNOG" id="KOG3802">
    <property type="taxonomic scope" value="Eukaryota"/>
</dbReference>
<dbReference type="GeneTree" id="ENSGT00940000156175"/>
<dbReference type="HOGENOM" id="CLU_013065_6_1_1"/>
<dbReference type="InParanoid" id="P78424"/>
<dbReference type="OrthoDB" id="10066259at2759"/>
<dbReference type="PAN-GO" id="P78424">
    <property type="GO annotations" value="3 GO annotations based on evolutionary models"/>
</dbReference>
<dbReference type="PhylomeDB" id="P78424"/>
<dbReference type="TreeFam" id="TF350705"/>
<dbReference type="PathwayCommons" id="P78424"/>
<dbReference type="SignaLink" id="P78424"/>
<dbReference type="BioGRID-ORCS" id="11281">
    <property type="hits" value="11 hits in 1169 CRISPR screens"/>
</dbReference>
<dbReference type="ChiTaRS" id="POU6F2">
    <property type="organism name" value="human"/>
</dbReference>
<dbReference type="GenomeRNAi" id="11281"/>
<dbReference type="Pharos" id="P78424">
    <property type="development level" value="Tbio"/>
</dbReference>
<dbReference type="PRO" id="PR:P78424"/>
<dbReference type="Proteomes" id="UP000005640">
    <property type="component" value="Chromosome 7"/>
</dbReference>
<dbReference type="RNAct" id="P78424">
    <property type="molecule type" value="protein"/>
</dbReference>
<dbReference type="Bgee" id="ENSG00000106536">
    <property type="expression patterns" value="Expressed in male germ line stem cell (sensu Vertebrata) in testis and 80 other cell types or tissues"/>
</dbReference>
<dbReference type="ExpressionAtlas" id="P78424">
    <property type="expression patterns" value="baseline and differential"/>
</dbReference>
<dbReference type="GO" id="GO:0000785">
    <property type="term" value="C:chromatin"/>
    <property type="evidence" value="ECO:0000247"/>
    <property type="project" value="NTNU_SB"/>
</dbReference>
<dbReference type="GO" id="GO:0005634">
    <property type="term" value="C:nucleus"/>
    <property type="evidence" value="ECO:0007669"/>
    <property type="project" value="UniProtKB-SubCell"/>
</dbReference>
<dbReference type="GO" id="GO:0003700">
    <property type="term" value="F:DNA-binding transcription factor activity"/>
    <property type="evidence" value="ECO:0000304"/>
    <property type="project" value="UniProtKB"/>
</dbReference>
<dbReference type="GO" id="GO:0000981">
    <property type="term" value="F:DNA-binding transcription factor activity, RNA polymerase II-specific"/>
    <property type="evidence" value="ECO:0000247"/>
    <property type="project" value="NTNU_SB"/>
</dbReference>
<dbReference type="GO" id="GO:0000978">
    <property type="term" value="F:RNA polymerase II cis-regulatory region sequence-specific DNA binding"/>
    <property type="evidence" value="ECO:0000318"/>
    <property type="project" value="GO_Central"/>
</dbReference>
<dbReference type="GO" id="GO:0007417">
    <property type="term" value="P:central nervous system development"/>
    <property type="evidence" value="ECO:0000304"/>
    <property type="project" value="ProtInc"/>
</dbReference>
<dbReference type="GO" id="GO:0007402">
    <property type="term" value="P:ganglion mother cell fate determination"/>
    <property type="evidence" value="ECO:0000304"/>
    <property type="project" value="ProtInc"/>
</dbReference>
<dbReference type="GO" id="GO:0006355">
    <property type="term" value="P:regulation of DNA-templated transcription"/>
    <property type="evidence" value="ECO:0000304"/>
    <property type="project" value="UniProtKB"/>
</dbReference>
<dbReference type="GO" id="GO:0006357">
    <property type="term" value="P:regulation of transcription by RNA polymerase II"/>
    <property type="evidence" value="ECO:0000318"/>
    <property type="project" value="GO_Central"/>
</dbReference>
<dbReference type="GO" id="GO:0007601">
    <property type="term" value="P:visual perception"/>
    <property type="evidence" value="ECO:0000304"/>
    <property type="project" value="ProtInc"/>
</dbReference>
<dbReference type="CDD" id="cd00086">
    <property type="entry name" value="homeodomain"/>
    <property type="match status" value="1"/>
</dbReference>
<dbReference type="FunFam" id="1.10.10.60:FF:000051">
    <property type="entry name" value="POU domain protein"/>
    <property type="match status" value="1"/>
</dbReference>
<dbReference type="Gene3D" id="1.10.10.60">
    <property type="entry name" value="Homeodomain-like"/>
    <property type="match status" value="1"/>
</dbReference>
<dbReference type="Gene3D" id="1.10.260.40">
    <property type="entry name" value="lambda repressor-like DNA-binding domains"/>
    <property type="match status" value="1"/>
</dbReference>
<dbReference type="InterPro" id="IPR001356">
    <property type="entry name" value="HD"/>
</dbReference>
<dbReference type="InterPro" id="IPR009057">
    <property type="entry name" value="Homeodomain-like_sf"/>
</dbReference>
<dbReference type="InterPro" id="IPR010982">
    <property type="entry name" value="Lambda_DNA-bd_dom_sf"/>
</dbReference>
<dbReference type="InterPro" id="IPR013847">
    <property type="entry name" value="POU"/>
</dbReference>
<dbReference type="InterPro" id="IPR000327">
    <property type="entry name" value="POU_dom"/>
</dbReference>
<dbReference type="InterPro" id="IPR050255">
    <property type="entry name" value="POU_domain_TF"/>
</dbReference>
<dbReference type="PANTHER" id="PTHR11636">
    <property type="entry name" value="POU DOMAIN"/>
    <property type="match status" value="1"/>
</dbReference>
<dbReference type="PANTHER" id="PTHR11636:SF68">
    <property type="entry name" value="POU DOMAIN, CLASS 6, TRANSCRIPTION FACTOR 2"/>
    <property type="match status" value="1"/>
</dbReference>
<dbReference type="Pfam" id="PF00046">
    <property type="entry name" value="Homeodomain"/>
    <property type="match status" value="1"/>
</dbReference>
<dbReference type="Pfam" id="PF00157">
    <property type="entry name" value="Pou"/>
    <property type="match status" value="2"/>
</dbReference>
<dbReference type="PRINTS" id="PR00028">
    <property type="entry name" value="POUDOMAIN"/>
</dbReference>
<dbReference type="SMART" id="SM00389">
    <property type="entry name" value="HOX"/>
    <property type="match status" value="1"/>
</dbReference>
<dbReference type="SMART" id="SM00352">
    <property type="entry name" value="POU"/>
    <property type="match status" value="1"/>
</dbReference>
<dbReference type="SUPFAM" id="SSF46689">
    <property type="entry name" value="Homeodomain-like"/>
    <property type="match status" value="1"/>
</dbReference>
<dbReference type="SUPFAM" id="SSF47413">
    <property type="entry name" value="lambda repressor-like DNA-binding domains"/>
    <property type="match status" value="1"/>
</dbReference>
<dbReference type="PROSITE" id="PS50071">
    <property type="entry name" value="HOMEOBOX_2"/>
    <property type="match status" value="1"/>
</dbReference>
<dbReference type="PROSITE" id="PS00035">
    <property type="entry name" value="POU_1"/>
    <property type="match status" value="1"/>
</dbReference>
<dbReference type="PROSITE" id="PS00465">
    <property type="entry name" value="POU_2"/>
    <property type="match status" value="1"/>
</dbReference>
<dbReference type="PROSITE" id="PS51179">
    <property type="entry name" value="POU_3"/>
    <property type="match status" value="1"/>
</dbReference>
<gene>
    <name type="primary">POU6F2</name>
    <name type="synonym">RPF1</name>
</gene>
<proteinExistence type="evidence at protein level"/>
<comment type="function">
    <text>Probable transcription factor likely to be involved in early steps in the differentiation of amacrine and ganglion cells. Recognizes and binds to the DNA sequence 5'-ATGCAAAT-3'. Isoform 1 does not bind DNA.</text>
</comment>
<comment type="interaction">
    <interactant intactId="EBI-12029004">
        <id>P78424</id>
    </interactant>
    <interactant intactId="EBI-2880652">
        <id>Q08043</id>
        <label>ACTN3</label>
    </interactant>
    <organismsDiffer>false</organismsDiffer>
    <experiments>3</experiments>
</comment>
<comment type="interaction">
    <interactant intactId="EBI-12029004">
        <id>P78424</id>
    </interactant>
    <interactant intactId="EBI-712648">
        <id>O95994</id>
        <label>AGR2</label>
    </interactant>
    <organismsDiffer>false</organismsDiffer>
    <experiments>3</experiments>
</comment>
<comment type="interaction">
    <interactant intactId="EBI-12029004">
        <id>P78424</id>
    </interactant>
    <interactant intactId="EBI-8643161">
        <id>Q9NX04</id>
        <label>AIRIM</label>
    </interactant>
    <organismsDiffer>false</organismsDiffer>
    <experiments>3</experiments>
</comment>
<comment type="interaction">
    <interactant intactId="EBI-12029004">
        <id>P78424</id>
    </interactant>
    <interactant intactId="EBI-12102070">
        <id>Q9NXR5-2</id>
        <label>ANKRD10</label>
    </interactant>
    <organismsDiffer>false</organismsDiffer>
    <experiments>3</experiments>
</comment>
<comment type="interaction">
    <interactant intactId="EBI-12029004">
        <id>P78424</id>
    </interactant>
    <interactant intactId="EBI-1642523">
        <id>Q15052</id>
        <label>ARHGEF6</label>
    </interactant>
    <organismsDiffer>false</organismsDiffer>
    <experiments>3</experiments>
</comment>
<comment type="interaction">
    <interactant intactId="EBI-12029004">
        <id>P78424</id>
    </interactant>
    <interactant intactId="EBI-12015080">
        <id>Q8WXK3-2</id>
        <label>ASB13</label>
    </interactant>
    <organismsDiffer>false</organismsDiffer>
    <experiments>3</experiments>
</comment>
<comment type="interaction">
    <interactant intactId="EBI-12029004">
        <id>P78424</id>
    </interactant>
    <interactant intactId="EBI-11524452">
        <id>Q8N9N5-2</id>
        <label>BANP</label>
    </interactant>
    <organismsDiffer>false</organismsDiffer>
    <experiments>3</experiments>
</comment>
<comment type="interaction">
    <interactant intactId="EBI-12029004">
        <id>P78424</id>
    </interactant>
    <interactant intactId="EBI-10229433">
        <id>Q13515</id>
        <label>BFSP2</label>
    </interactant>
    <organismsDiffer>false</organismsDiffer>
    <experiments>3</experiments>
</comment>
<comment type="interaction">
    <interactant intactId="EBI-12029004">
        <id>P78424</id>
    </interactant>
    <interactant intactId="EBI-711810">
        <id>O14503</id>
        <label>BHLHE40</label>
    </interactant>
    <organismsDiffer>false</organismsDiffer>
    <experiments>3</experiments>
</comment>
<comment type="interaction">
    <interactant intactId="EBI-12029004">
        <id>P78424</id>
    </interactant>
    <interactant intactId="EBI-8558308">
        <id>P01031</id>
        <label>C5</label>
    </interactant>
    <organismsDiffer>false</organismsDiffer>
    <experiments>3</experiments>
</comment>
<comment type="interaction">
    <interactant intactId="EBI-12029004">
        <id>P78424</id>
    </interactant>
    <interactant intactId="EBI-10175300">
        <id>Q8TD31-3</id>
        <label>CCHCR1</label>
    </interactant>
    <organismsDiffer>false</organismsDiffer>
    <experiments>3</experiments>
</comment>
<comment type="interaction">
    <interactant intactId="EBI-12029004">
        <id>P78424</id>
    </interactant>
    <interactant intactId="EBI-395261">
        <id>P24863</id>
        <label>CCNC</label>
    </interactant>
    <organismsDiffer>false</organismsDiffer>
    <experiments>3</experiments>
</comment>
<comment type="interaction">
    <interactant intactId="EBI-12029004">
        <id>P78424</id>
    </interactant>
    <interactant intactId="EBI-12010594">
        <id>O75909-2</id>
        <label>CCNK</label>
    </interactant>
    <organismsDiffer>false</organismsDiffer>
    <experiments>3</experiments>
</comment>
<comment type="interaction">
    <interactant intactId="EBI-12029004">
        <id>P78424</id>
    </interactant>
    <interactant intactId="EBI-396137">
        <id>Q9UJX2</id>
        <label>CDC23</label>
    </interactant>
    <organismsDiffer>false</organismsDiffer>
    <experiments>3</experiments>
</comment>
<comment type="interaction">
    <interactant intactId="EBI-12029004">
        <id>P78424</id>
    </interactant>
    <interactant intactId="EBI-295634">
        <id>Q16543</id>
        <label>CDC37</label>
    </interactant>
    <organismsDiffer>false</organismsDiffer>
    <experiments>3</experiments>
</comment>
<comment type="interaction">
    <interactant intactId="EBI-12029004">
        <id>P78424</id>
    </interactant>
    <interactant intactId="EBI-711290">
        <id>P42773</id>
        <label>CDKN2C</label>
    </interactant>
    <organismsDiffer>false</organismsDiffer>
    <experiments>3</experiments>
</comment>
<comment type="interaction">
    <interactant intactId="EBI-12029004">
        <id>P78424</id>
    </interactant>
    <interactant intactId="EBI-1020839">
        <id>Q13111</id>
        <label>CHAF1A</label>
    </interactant>
    <organismsDiffer>false</organismsDiffer>
    <experiments>3</experiments>
</comment>
<comment type="interaction">
    <interactant intactId="EBI-12029004">
        <id>P78424</id>
    </interactant>
    <interactant intactId="EBI-10292696">
        <id>Q96Q77</id>
        <label>CIB3</label>
    </interactant>
    <organismsDiffer>false</organismsDiffer>
    <experiments>3</experiments>
</comment>
<comment type="interaction">
    <interactant intactId="EBI-12029004">
        <id>P78424</id>
    </interactant>
    <interactant intactId="EBI-739784">
        <id>Q9BW66</id>
        <label>CINP</label>
    </interactant>
    <organismsDiffer>false</organismsDiffer>
    <experiments>3</experiments>
</comment>
<comment type="interaction">
    <interactant intactId="EBI-12029004">
        <id>P78424</id>
    </interactant>
    <interactant intactId="EBI-347804">
        <id>P68400</id>
        <label>CSNK2A1</label>
    </interactant>
    <organismsDiffer>false</organismsDiffer>
    <experiments>3</experiments>
</comment>
<comment type="interaction">
    <interactant intactId="EBI-12029004">
        <id>P78424</id>
    </interactant>
    <interactant intactId="EBI-711360">
        <id>P33240</id>
        <label>CSTF2</label>
    </interactant>
    <organismsDiffer>false</organismsDiffer>
    <experiments>3</experiments>
</comment>
<comment type="interaction">
    <interactant intactId="EBI-12029004">
        <id>P78424</id>
    </interactant>
    <interactant intactId="EBI-11962928">
        <id>Q9UI47-2</id>
        <label>CTNNA3</label>
    </interactant>
    <organismsDiffer>false</organismsDiffer>
    <experiments>3</experiments>
</comment>
<comment type="interaction">
    <interactant intactId="EBI-12029004">
        <id>P78424</id>
    </interactant>
    <interactant intactId="EBI-351257">
        <id>P26196</id>
        <label>DDX6</label>
    </interactant>
    <organismsDiffer>false</organismsDiffer>
    <experiments>3</experiments>
</comment>
<comment type="interaction">
    <interactant intactId="EBI-12029004">
        <id>P78424</id>
    </interactant>
    <interactant intactId="EBI-11984733">
        <id>O60941-5</id>
        <label>DTNB</label>
    </interactant>
    <organismsDiffer>false</organismsDiffer>
    <experiments>3</experiments>
</comment>
<comment type="interaction">
    <interactant intactId="EBI-12029004">
        <id>P78424</id>
    </interactant>
    <interactant intactId="EBI-740680">
        <id>Q8WWB3</id>
        <label>DYDC1</label>
    </interactant>
    <organismsDiffer>false</organismsDiffer>
    <experiments>3</experiments>
</comment>
<comment type="interaction">
    <interactant intactId="EBI-12029004">
        <id>P78424</id>
    </interactant>
    <interactant intactId="EBI-765426">
        <id>Q9UH73</id>
        <label>EBF1</label>
    </interactant>
    <organismsDiffer>false</organismsDiffer>
    <experiments>3</experiments>
</comment>
<comment type="interaction">
    <interactant intactId="EBI-12029004">
        <id>P78424</id>
    </interactant>
    <interactant intactId="EBI-711990">
        <id>O00303</id>
        <label>EIF3F</label>
    </interactant>
    <organismsDiffer>false</organismsDiffer>
    <experiments>6</experiments>
</comment>
<comment type="interaction">
    <interactant intactId="EBI-12029004">
        <id>P78424</id>
    </interactant>
    <interactant intactId="EBI-74090">
        <id>Q13541</id>
        <label>EIF4EBP1</label>
    </interactant>
    <organismsDiffer>false</organismsDiffer>
    <experiments>3</experiments>
</comment>
<comment type="interaction">
    <interactant intactId="EBI-12029004">
        <id>P78424</id>
    </interactant>
    <interactant intactId="EBI-10182490">
        <id>O15197-2</id>
        <label>EPHB6</label>
    </interactant>
    <organismsDiffer>false</organismsDiffer>
    <experiments>3</experiments>
</comment>
<comment type="interaction">
    <interactant intactId="EBI-12029004">
        <id>P78424</id>
    </interactant>
    <interactant intactId="EBI-701903">
        <id>Q14192</id>
        <label>FHL2</label>
    </interactant>
    <organismsDiffer>false</organismsDiffer>
    <experiments>3</experiments>
</comment>
<comment type="interaction">
    <interactant intactId="EBI-12029004">
        <id>P78424</id>
    </interactant>
    <interactant intactId="EBI-10242151">
        <id>Q53EP0-3</id>
        <label>FNDC3B</label>
    </interactant>
    <organismsDiffer>false</organismsDiffer>
    <experiments>3</experiments>
</comment>
<comment type="interaction">
    <interactant intactId="EBI-12029004">
        <id>P78424</id>
    </interactant>
    <interactant intactId="EBI-2806743">
        <id>P53539</id>
        <label>FOSB</label>
    </interactant>
    <organismsDiffer>false</organismsDiffer>
    <experiments>5</experiments>
</comment>
<comment type="interaction">
    <interactant intactId="EBI-12029004">
        <id>P78424</id>
    </interactant>
    <interactant intactId="EBI-10188645">
        <id>O75603</id>
        <label>GCM2</label>
    </interactant>
    <organismsDiffer>false</organismsDiffer>
    <experiments>3</experiments>
</comment>
<comment type="interaction">
    <interactant intactId="EBI-12029004">
        <id>P78424</id>
    </interactant>
    <interactant intactId="EBI-7251368">
        <id>Q9BZE0</id>
        <label>GLIS2</label>
    </interactant>
    <organismsDiffer>false</organismsDiffer>
    <experiments>3</experiments>
</comment>
<comment type="interaction">
    <interactant intactId="EBI-12029004">
        <id>P78424</id>
    </interactant>
    <interactant intactId="EBI-948296">
        <id>Q9UKD1</id>
        <label>GMEB2</label>
    </interactant>
    <organismsDiffer>false</organismsDiffer>
    <experiments>3</experiments>
</comment>
<comment type="interaction">
    <interactant intactId="EBI-12029004">
        <id>P78424</id>
    </interactant>
    <interactant intactId="EBI-5916454">
        <id>A6NEM1</id>
        <label>GOLGA6L9</label>
    </interactant>
    <organismsDiffer>false</organismsDiffer>
    <experiments>3</experiments>
</comment>
<comment type="interaction">
    <interactant intactId="EBI-12029004">
        <id>P78424</id>
    </interactant>
    <interactant intactId="EBI-740220">
        <id>O14964</id>
        <label>HGS</label>
    </interactant>
    <organismsDiffer>false</organismsDiffer>
    <experiments>3</experiments>
</comment>
<comment type="interaction">
    <interactant intactId="EBI-12029004">
        <id>P78424</id>
    </interactant>
    <interactant intactId="EBI-2798841">
        <id>P35680</id>
        <label>HNF1B</label>
    </interactant>
    <organismsDiffer>false</organismsDiffer>
    <experiments>3</experiments>
</comment>
<comment type="interaction">
    <interactant intactId="EBI-12029004">
        <id>P78424</id>
    </interactant>
    <interactant intactId="EBI-11955357">
        <id>Q00444</id>
        <label>HOXC5</label>
    </interactant>
    <organismsDiffer>false</organismsDiffer>
    <experiments>3</experiments>
</comment>
<comment type="interaction">
    <interactant intactId="EBI-12029004">
        <id>P78424</id>
    </interactant>
    <interactant intactId="EBI-1752118">
        <id>P31273</id>
        <label>HOXC8</label>
    </interactant>
    <organismsDiffer>false</organismsDiffer>
    <experiments>3</experiments>
</comment>
<comment type="interaction">
    <interactant intactId="EBI-12029004">
        <id>P78424</id>
    </interactant>
    <interactant intactId="EBI-356933">
        <id>P34932</id>
        <label>HSPA4</label>
    </interactant>
    <organismsDiffer>false</organismsDiffer>
    <experiments>3</experiments>
</comment>
<comment type="interaction">
    <interactant intactId="EBI-12029004">
        <id>P78424</id>
    </interactant>
    <interactant intactId="EBI-11955401">
        <id>Q86VF2-5</id>
        <label>IGFN1</label>
    </interactant>
    <organismsDiffer>false</organismsDiffer>
    <experiments>3</experiments>
</comment>
<comment type="interaction">
    <interactant intactId="EBI-12029004">
        <id>P78424</id>
    </interactant>
    <interactant intactId="EBI-353389">
        <id>P12268</id>
        <label>IMPDH2</label>
    </interactant>
    <organismsDiffer>false</organismsDiffer>
    <experiments>3</experiments>
</comment>
<comment type="interaction">
    <interactant intactId="EBI-12029004">
        <id>P78424</id>
    </interactant>
    <interactant intactId="EBI-10220600">
        <id>Q8NA54</id>
        <label>IQUB</label>
    </interactant>
    <organismsDiffer>false</organismsDiffer>
    <experiments>3</experiments>
</comment>
<comment type="interaction">
    <interactant intactId="EBI-12029004">
        <id>P78424</id>
    </interactant>
    <interactant intactId="EBI-12073510">
        <id>P78413</id>
        <label>IRX4</label>
    </interactant>
    <organismsDiffer>false</organismsDiffer>
    <experiments>3</experiments>
</comment>
<comment type="interaction">
    <interactant intactId="EBI-12029004">
        <id>P78424</id>
    </interactant>
    <interactant intactId="EBI-6426064">
        <id>Q2M1V0</id>
        <label>ISX</label>
    </interactant>
    <organismsDiffer>false</organismsDiffer>
    <experiments>3</experiments>
</comment>
<comment type="interaction">
    <interactant intactId="EBI-12029004">
        <id>P78424</id>
    </interactant>
    <interactant intactId="EBI-11997992">
        <id>Q8NAX2</id>
        <label>KDF1</label>
    </interactant>
    <organismsDiffer>false</organismsDiffer>
    <experiments>3</experiments>
</comment>
<comment type="interaction">
    <interactant intactId="EBI-12029004">
        <id>P78424</id>
    </interactant>
    <interactant intactId="EBI-355878">
        <id>P33176</id>
        <label>KIF5B</label>
    </interactant>
    <organismsDiffer>false</organismsDiffer>
    <experiments>3</experiments>
</comment>
<comment type="interaction">
    <interactant intactId="EBI-12029004">
        <id>P78424</id>
    </interactant>
    <interactant intactId="EBI-2691832">
        <id>Q9NVR0</id>
        <label>KLHL11</label>
    </interactant>
    <organismsDiffer>false</organismsDiffer>
    <experiments>3</experiments>
</comment>
<comment type="interaction">
    <interactant intactId="EBI-12029004">
        <id>P78424</id>
    </interactant>
    <interactant intactId="EBI-540602">
        <id>O15131</id>
        <label>KPNA5</label>
    </interactant>
    <organismsDiffer>false</organismsDiffer>
    <experiments>3</experiments>
</comment>
<comment type="interaction">
    <interactant intactId="EBI-12029004">
        <id>P78424</id>
    </interactant>
    <interactant intactId="EBI-359923">
        <id>O60684</id>
        <label>KPNA6</label>
    </interactant>
    <organismsDiffer>false</organismsDiffer>
    <experiments>3</experiments>
</comment>
<comment type="interaction">
    <interactant intactId="EBI-12029004">
        <id>P78424</id>
    </interactant>
    <interactant intactId="EBI-10261141">
        <id>Q8IUC2</id>
        <label>KRTAP8-1</label>
    </interactant>
    <organismsDiffer>false</organismsDiffer>
    <experiments>3</experiments>
</comment>
<comment type="interaction">
    <interactant intactId="EBI-12029004">
        <id>P78424</id>
    </interactant>
    <interactant intactId="EBI-739909">
        <id>Q969R5</id>
        <label>L3MBTL2</label>
    </interactant>
    <organismsDiffer>false</organismsDiffer>
    <experiments>3</experiments>
</comment>
<comment type="interaction">
    <interactant intactId="EBI-12029004">
        <id>P78424</id>
    </interactant>
    <interactant intactId="EBI-12079790">
        <id>Q6P4E2</id>
        <label>LARP4</label>
    </interactant>
    <organismsDiffer>false</organismsDiffer>
    <experiments>3</experiments>
</comment>
<comment type="interaction">
    <interactant intactId="EBI-12029004">
        <id>P78424</id>
    </interactant>
    <interactant intactId="EBI-2830427">
        <id>Q03252</id>
        <label>LMNB2</label>
    </interactant>
    <organismsDiffer>false</organismsDiffer>
    <experiments>3</experiments>
</comment>
<comment type="interaction">
    <interactant intactId="EBI-12029004">
        <id>P78424</id>
    </interactant>
    <interactant intactId="EBI-11742507">
        <id>Q8TAP4-4</id>
        <label>LMO3</label>
    </interactant>
    <organismsDiffer>false</organismsDiffer>
    <experiments>3</experiments>
</comment>
<comment type="interaction">
    <interactant intactId="EBI-12029004">
        <id>P78424</id>
    </interactant>
    <interactant intactId="EBI-739832">
        <id>Q8TBB1</id>
        <label>LNX1</label>
    </interactant>
    <organismsDiffer>false</organismsDiffer>
    <experiments>3</experiments>
</comment>
<comment type="interaction">
    <interactant intactId="EBI-12029004">
        <id>P78424</id>
    </interactant>
    <interactant intactId="EBI-2341787">
        <id>Q17RB8</id>
        <label>LONRF1</label>
    </interactant>
    <organismsDiffer>false</organismsDiffer>
    <experiments>3</experiments>
</comment>
<comment type="interaction">
    <interactant intactId="EBI-12029004">
        <id>P78424</id>
    </interactant>
    <interactant intactId="EBI-749530">
        <id>P43365</id>
        <label>MAGEA12</label>
    </interactant>
    <organismsDiffer>false</organismsDiffer>
    <experiments>3</experiments>
</comment>
<comment type="interaction">
    <interactant intactId="EBI-12029004">
        <id>P78424</id>
    </interactant>
    <interactant intactId="EBI-713568">
        <id>P45984</id>
        <label>MAPK9</label>
    </interactant>
    <organismsDiffer>false</organismsDiffer>
    <experiments>3</experiments>
</comment>
<comment type="interaction">
    <interactant intactId="EBI-12029004">
        <id>P78424</id>
    </interactant>
    <interactant intactId="EBI-8025850">
        <id>O14770-4</id>
        <label>MEIS2</label>
    </interactant>
    <organismsDiffer>false</organismsDiffer>
    <experiments>3</experiments>
</comment>
<comment type="interaction">
    <interactant intactId="EBI-12029004">
        <id>P78424</id>
    </interactant>
    <interactant intactId="EBI-6137472">
        <id>Q9BRT3</id>
        <label>MIEN1</label>
    </interactant>
    <organismsDiffer>false</organismsDiffer>
    <experiments>3</experiments>
</comment>
<comment type="interaction">
    <interactant intactId="EBI-12029004">
        <id>P78424</id>
    </interactant>
    <interactant intactId="EBI-12853322">
        <id>P55197-2</id>
        <label>MLLT10</label>
    </interactant>
    <organismsDiffer>false</organismsDiffer>
    <experiments>3</experiments>
</comment>
<comment type="interaction">
    <interactant intactId="EBI-12029004">
        <id>P78424</id>
    </interactant>
    <interactant intactId="EBI-399257">
        <id>Q15014</id>
        <label>MORF4L2</label>
    </interactant>
    <organismsDiffer>false</organismsDiffer>
    <experiments>3</experiments>
</comment>
<comment type="interaction">
    <interactant intactId="EBI-12029004">
        <id>P78424</id>
    </interactant>
    <interactant intactId="EBI-10699187">
        <id>Q8IXL7-2</id>
        <label>MSRB3</label>
    </interactant>
    <organismsDiffer>false</organismsDiffer>
    <experiments>3</experiments>
</comment>
<comment type="interaction">
    <interactant intactId="EBI-12029004">
        <id>P78424</id>
    </interactant>
    <interactant intactId="EBI-6447480">
        <id>P35548</id>
        <label>MSX2</label>
    </interactant>
    <organismsDiffer>false</organismsDiffer>
    <experiments>3</experiments>
</comment>
<comment type="interaction">
    <interactant intactId="EBI-12029004">
        <id>P78424</id>
    </interactant>
    <interactant intactId="EBI-10222416">
        <id>Q01449</id>
        <label>MYL7</label>
    </interactant>
    <organismsDiffer>false</organismsDiffer>
    <experiments>3</experiments>
</comment>
<comment type="interaction">
    <interactant intactId="EBI-12029004">
        <id>P78424</id>
    </interactant>
    <interactant intactId="EBI-7950783">
        <id>Q96JP2</id>
        <label>MYO15B</label>
    </interactant>
    <organismsDiffer>false</organismsDiffer>
    <experiments>3</experiments>
</comment>
<comment type="interaction">
    <interactant intactId="EBI-12029004">
        <id>P78424</id>
    </interactant>
    <interactant intactId="EBI-10328570">
        <id>Q9Y4Z2</id>
        <label>NEUROG3</label>
    </interactant>
    <organismsDiffer>false</organismsDiffer>
    <experiments>3</experiments>
</comment>
<comment type="interaction">
    <interactant intactId="EBI-12029004">
        <id>P78424</id>
    </interactant>
    <interactant intactId="EBI-11956831">
        <id>Q13952-2</id>
        <label>NFYC</label>
    </interactant>
    <organismsDiffer>false</organismsDiffer>
    <experiments>3</experiments>
</comment>
<comment type="interaction">
    <interactant intactId="EBI-12029004">
        <id>P78424</id>
    </interactant>
    <interactant intactId="EBI-12077522">
        <id>P78367</id>
        <label>NKX3-2</label>
    </interactant>
    <organismsDiffer>false</organismsDiffer>
    <experiments>3</experiments>
</comment>
<comment type="interaction">
    <interactant intactId="EBI-12029004">
        <id>P78424</id>
    </interactant>
    <interactant intactId="EBI-744782">
        <id>Q9Y5B8</id>
        <label>NME7</label>
    </interactant>
    <organismsDiffer>false</organismsDiffer>
    <experiments>3</experiments>
</comment>
<comment type="interaction">
    <interactant intactId="EBI-12029004">
        <id>P78424</id>
    </interactant>
    <interactant intactId="EBI-751933">
        <id>Q9H1M0</id>
        <label>NUP62CL</label>
    </interactant>
    <organismsDiffer>false</organismsDiffer>
    <experiments>3</experiments>
</comment>
<comment type="interaction">
    <interactant intactId="EBI-12029004">
        <id>P78424</id>
    </interactant>
    <interactant intactId="EBI-12049527">
        <id>Q9UMX2-2</id>
        <label>OAZ3</label>
    </interactant>
    <organismsDiffer>false</organismsDiffer>
    <experiments>3</experiments>
</comment>
<comment type="interaction">
    <interactant intactId="EBI-12029004">
        <id>P78424</id>
    </interactant>
    <interactant intactId="EBI-536879">
        <id>O43482</id>
        <label>OIP5</label>
    </interactant>
    <organismsDiffer>false</organismsDiffer>
    <experiments>3</experiments>
</comment>
<comment type="interaction">
    <interactant intactId="EBI-12029004">
        <id>P78424</id>
    </interactant>
    <interactant intactId="EBI-3938544">
        <id>O14841</id>
        <label>OPLAH</label>
    </interactant>
    <organismsDiffer>false</organismsDiffer>
    <experiments>3</experiments>
</comment>
<comment type="interaction">
    <interactant intactId="EBI-12029004">
        <id>P78424</id>
    </interactant>
    <interactant intactId="EBI-748974">
        <id>Q96CV9</id>
        <label>OPTN</label>
    </interactant>
    <organismsDiffer>false</organismsDiffer>
    <experiments>3</experiments>
</comment>
<comment type="interaction">
    <interactant intactId="EBI-12029004">
        <id>P78424</id>
    </interactant>
    <interactant intactId="EBI-1042511">
        <id>Q9UM07</id>
        <label>PADI4</label>
    </interactant>
    <organismsDiffer>false</organismsDiffer>
    <experiments>3</experiments>
</comment>
<comment type="interaction">
    <interactant intactId="EBI-12029004">
        <id>P78424</id>
    </interactant>
    <interactant intactId="EBI-3921217">
        <id>Q9HBI0</id>
        <label>PARVG</label>
    </interactant>
    <organismsDiffer>false</organismsDiffer>
    <experiments>3</experiments>
</comment>
<comment type="interaction">
    <interactant intactId="EBI-12029004">
        <id>P78424</id>
    </interactant>
    <interactant intactId="EBI-10231995">
        <id>Q13956</id>
        <label>PDE6H</label>
    </interactant>
    <organismsDiffer>false</organismsDiffer>
    <experiments>3</experiments>
</comment>
<comment type="interaction">
    <interactant intactId="EBI-12029004">
        <id>P78424</id>
    </interactant>
    <interactant intactId="EBI-14066006">
        <id>Q4G0R1</id>
        <label>PIBF1</label>
    </interactant>
    <organismsDiffer>false</organismsDiffer>
    <experiments>3</experiments>
</comment>
<comment type="interaction">
    <interactant intactId="EBI-12029004">
        <id>P78424</id>
    </interactant>
    <interactant intactId="EBI-602382">
        <id>Q16512</id>
        <label>PKN1</label>
    </interactant>
    <organismsDiffer>false</organismsDiffer>
    <experiments>3</experiments>
</comment>
<comment type="interaction">
    <interactant intactId="EBI-12029004">
        <id>P78424</id>
    </interactant>
    <interactant intactId="EBI-12387058">
        <id>Q9HDD0</id>
        <label>PLAAT1</label>
    </interactant>
    <organismsDiffer>false</organismsDiffer>
    <experiments>3</experiments>
</comment>
<comment type="interaction">
    <interactant intactId="EBI-12029004">
        <id>P78424</id>
    </interactant>
    <interactant intactId="EBI-11339910">
        <id>Q8IYS1</id>
        <label>PM20D2</label>
    </interactant>
    <organismsDiffer>false</organismsDiffer>
    <experiments>3</experiments>
</comment>
<comment type="interaction">
    <interactant intactId="EBI-12029004">
        <id>P78424</id>
    </interactant>
    <interactant intactId="EBI-5452779">
        <id>Q9BUI4</id>
        <label>POLR3C</label>
    </interactant>
    <organismsDiffer>false</organismsDiffer>
    <experiments>3</experiments>
</comment>
<comment type="interaction">
    <interactant intactId="EBI-12029004">
        <id>P78424</id>
    </interactant>
    <interactant intactId="EBI-11526590">
        <id>P14859-6</id>
        <label>POU2F1</label>
    </interactant>
    <organismsDiffer>false</organismsDiffer>
    <experiments>3</experiments>
</comment>
<comment type="interaction">
    <interactant intactId="EBI-12029004">
        <id>P78424</id>
    </interactant>
    <interactant intactId="EBI-2557649">
        <id>Q9Y3C6</id>
        <label>PPIL1</label>
    </interactant>
    <organismsDiffer>false</organismsDiffer>
    <experiments>3</experiments>
</comment>
<comment type="interaction">
    <interactant intactId="EBI-12029004">
        <id>P78424</id>
    </interactant>
    <interactant intactId="EBI-12906508">
        <id>O43314-2</id>
        <label>PPIP5K2</label>
    </interactant>
    <organismsDiffer>false</organismsDiffer>
    <experiments>3</experiments>
</comment>
<comment type="interaction">
    <interactant intactId="EBI-12029004">
        <id>P78424</id>
    </interactant>
    <interactant intactId="EBI-9027467">
        <id>O75360</id>
        <label>PROP1</label>
    </interactant>
    <organismsDiffer>false</organismsDiffer>
    <experiments>3</experiments>
</comment>
<comment type="interaction">
    <interactant intactId="EBI-12029004">
        <id>P78424</id>
    </interactant>
    <interactant intactId="EBI-12754095">
        <id>P86480</id>
        <label>PRR20D</label>
    </interactant>
    <organismsDiffer>false</organismsDiffer>
    <experiments>3</experiments>
</comment>
<comment type="interaction">
    <interactant intactId="EBI-12029004">
        <id>P78424</id>
    </interactant>
    <interactant intactId="EBI-2798044">
        <id>Q2TAL8</id>
        <label>QRICH1</label>
    </interactant>
    <organismsDiffer>false</organismsDiffer>
    <experiments>3</experiments>
</comment>
<comment type="interaction">
    <interactant intactId="EBI-12029004">
        <id>P78424</id>
    </interactant>
    <interactant intactId="EBI-954531">
        <id>P54727</id>
        <label>RAD23B</label>
    </interactant>
    <organismsDiffer>false</organismsDiffer>
    <experiments>3</experiments>
</comment>
<comment type="interaction">
    <interactant intactId="EBI-12029004">
        <id>P78424</id>
    </interactant>
    <interactant intactId="EBI-395290">
        <id>Q14498</id>
        <label>RBM39</label>
    </interactant>
    <organismsDiffer>false</organismsDiffer>
    <experiments>3</experiments>
</comment>
<comment type="interaction">
    <interactant intactId="EBI-12029004">
        <id>P78424</id>
    </interactant>
    <interactant intactId="EBI-740343">
        <id>Q93062-3</id>
        <label>RBPMS</label>
    </interactant>
    <organismsDiffer>false</organismsDiffer>
    <experiments>3</experiments>
</comment>
<comment type="interaction">
    <interactant intactId="EBI-12029004">
        <id>P78424</id>
    </interactant>
    <interactant intactId="EBI-10489476">
        <id>Q96CP1</id>
        <label>RELA</label>
    </interactant>
    <organismsDiffer>false</organismsDiffer>
    <experiments>3</experiments>
</comment>
<comment type="interaction">
    <interactant intactId="EBI-12029004">
        <id>P78424</id>
    </interactant>
    <interactant intactId="EBI-743675">
        <id>Q15475</id>
        <label>SIX1</label>
    </interactant>
    <organismsDiffer>false</organismsDiffer>
    <experiments>3</experiments>
</comment>
<comment type="interaction">
    <interactant intactId="EBI-12029004">
        <id>P78424</id>
    </interactant>
    <interactant intactId="EBI-6391136">
        <id>Q99717</id>
        <label>SMAD5</label>
    </interactant>
    <organismsDiffer>false</organismsDiffer>
    <experiments>3</experiments>
</comment>
<comment type="interaction">
    <interactant intactId="EBI-12029004">
        <id>P78424</id>
    </interactant>
    <interactant intactId="EBI-8463848">
        <id>Q8NB12</id>
        <label>SMYD1</label>
    </interactant>
    <organismsDiffer>false</organismsDiffer>
    <experiments>3</experiments>
</comment>
<comment type="interaction">
    <interactant intactId="EBI-12029004">
        <id>P78424</id>
    </interactant>
    <interactant intactId="EBI-1171329">
        <id>Q92673</id>
        <label>SORL1</label>
    </interactant>
    <organismsDiffer>false</organismsDiffer>
    <experiments>3</experiments>
</comment>
<comment type="interaction">
    <interactant intactId="EBI-12029004">
        <id>P78424</id>
    </interactant>
    <interactant intactId="EBI-1167533">
        <id>P56693</id>
        <label>SOX10</label>
    </interactant>
    <organismsDiffer>false</organismsDiffer>
    <experiments>3</experiments>
</comment>
<comment type="interaction">
    <interactant intactId="EBI-12029004">
        <id>P78424</id>
    </interactant>
    <interactant intactId="EBI-12231891">
        <id>Q9Y2M2-2</id>
        <label>SSUH2</label>
    </interactant>
    <organismsDiffer>false</organismsDiffer>
    <experiments>3</experiments>
</comment>
<comment type="interaction">
    <interactant intactId="EBI-12029004">
        <id>P78424</id>
    </interactant>
    <interactant intactId="EBI-2652799">
        <id>Q99469</id>
        <label>STAC</label>
    </interactant>
    <organismsDiffer>false</organismsDiffer>
    <experiments>3</experiments>
</comment>
<comment type="interaction">
    <interactant intactId="EBI-12029004">
        <id>P78424</id>
    </interactant>
    <interactant intactId="EBI-12036261">
        <id>Q7Z7C7</id>
        <label>STRA8</label>
    </interactant>
    <organismsDiffer>false</organismsDiffer>
    <experiments>3</experiments>
</comment>
<comment type="interaction">
    <interactant intactId="EBI-12029004">
        <id>P78424</id>
    </interactant>
    <interactant intactId="EBI-2824328">
        <id>O95947</id>
        <label>TBX6</label>
    </interactant>
    <organismsDiffer>false</organismsDiffer>
    <experiments>3</experiments>
</comment>
<comment type="interaction">
    <interactant intactId="EBI-12029004">
        <id>P78424</id>
    </interactant>
    <interactant intactId="EBI-710310">
        <id>Q15560</id>
        <label>TCEA2</label>
    </interactant>
    <organismsDiffer>false</organismsDiffer>
    <experiments>3</experiments>
</comment>
<comment type="interaction">
    <interactant intactId="EBI-12029004">
        <id>P78424</id>
    </interactant>
    <interactant intactId="EBI-752030">
        <id>Q96A09</id>
        <label>TENT5B</label>
    </interactant>
    <organismsDiffer>false</organismsDiffer>
    <experiments>3</experiments>
</comment>
<comment type="interaction">
    <interactant intactId="EBI-12029004">
        <id>P78424</id>
    </interactant>
    <interactant intactId="EBI-12232803">
        <id>Q6YHU6-6</id>
        <label>THADA</label>
    </interactant>
    <organismsDiffer>false</organismsDiffer>
    <experiments>3</experiments>
</comment>
<comment type="interaction">
    <interactant intactId="EBI-12029004">
        <id>P78424</id>
    </interactant>
    <interactant intactId="EBI-741515">
        <id>Q9NVV9</id>
        <label>THAP1</label>
    </interactant>
    <organismsDiffer>false</organismsDiffer>
    <experiments>3</experiments>
</comment>
<comment type="interaction">
    <interactant intactId="EBI-12029004">
        <id>P78424</id>
    </interactant>
    <interactant intactId="EBI-6101484">
        <id>O43763</id>
        <label>TLX2</label>
    </interactant>
    <organismsDiffer>false</organismsDiffer>
    <experiments>3</experiments>
</comment>
<comment type="interaction">
    <interactant intactId="EBI-12029004">
        <id>P78424</id>
    </interactant>
    <interactant intactId="EBI-3939165">
        <id>O43711</id>
        <label>TLX3</label>
    </interactant>
    <organismsDiffer>false</organismsDiffer>
    <experiments>3</experiments>
</comment>
<comment type="interaction">
    <interactant intactId="EBI-12029004">
        <id>P78424</id>
    </interactant>
    <interactant intactId="EBI-12076664">
        <id>O14787-2</id>
        <label>TNPO2</label>
    </interactant>
    <organismsDiffer>false</organismsDiffer>
    <experiments>3</experiments>
</comment>
<comment type="interaction">
    <interactant intactId="EBI-12029004">
        <id>P78424</id>
    </interactant>
    <interactant intactId="EBI-20753895">
        <id>P22105-1</id>
        <label>TNXB</label>
    </interactant>
    <organismsDiffer>false</organismsDiffer>
    <experiments>3</experiments>
</comment>
<comment type="interaction">
    <interactant intactId="EBI-12029004">
        <id>P78424</id>
    </interactant>
    <interactant intactId="EBI-396540">
        <id>Q12888</id>
        <label>TP53BP1</label>
    </interactant>
    <organismsDiffer>false</organismsDiffer>
    <experiments>3</experiments>
</comment>
<comment type="interaction">
    <interactant intactId="EBI-12029004">
        <id>P78424</id>
    </interactant>
    <interactant intactId="EBI-10259086">
        <id>Q86UV6-2</id>
        <label>TRIM74</label>
    </interactant>
    <organismsDiffer>false</organismsDiffer>
    <experiments>3</experiments>
</comment>
<comment type="interaction">
    <interactant intactId="EBI-12029004">
        <id>P78424</id>
    </interactant>
    <interactant intactId="EBI-11059915">
        <id>Q8N7C3</id>
        <label>TRIML2</label>
    </interactant>
    <organismsDiffer>false</organismsDiffer>
    <experiments>3</experiments>
</comment>
<comment type="interaction">
    <interactant intactId="EBI-12029004">
        <id>P78424</id>
    </interactant>
    <interactant intactId="EBI-12806590">
        <id>Q86WV8</id>
        <label>TSC1</label>
    </interactant>
    <organismsDiffer>false</organismsDiffer>
    <experiments>5</experiments>
</comment>
<comment type="interaction">
    <interactant intactId="EBI-12029004">
        <id>P78424</id>
    </interactant>
    <interactant intactId="EBI-372432">
        <id>Q8WW01</id>
        <label>TSEN15</label>
    </interactant>
    <organismsDiffer>false</organismsDiffer>
    <experiments>3</experiments>
</comment>
<comment type="interaction">
    <interactant intactId="EBI-12029004">
        <id>P78424</id>
    </interactant>
    <interactant intactId="EBI-948354">
        <id>Q6DKK2</id>
        <label>TTC19</label>
    </interactant>
    <organismsDiffer>false</organismsDiffer>
    <experiments>3</experiments>
</comment>
<comment type="interaction">
    <interactant intactId="EBI-12029004">
        <id>P78424</id>
    </interactant>
    <interactant intactId="EBI-9090990">
        <id>Q5W5X9-3</id>
        <label>TTC23</label>
    </interactant>
    <organismsDiffer>false</organismsDiffer>
    <experiments>3</experiments>
</comment>
<comment type="interaction">
    <interactant intactId="EBI-12029004">
        <id>P78424</id>
    </interactant>
    <interactant intactId="EBI-749370">
        <id>Q9BSL1</id>
        <label>UBAC1</label>
    </interactant>
    <organismsDiffer>false</organismsDiffer>
    <experiments>3</experiments>
</comment>
<comment type="interaction">
    <interactant intactId="EBI-12029004">
        <id>P78424</id>
    </interactant>
    <interactant intactId="EBI-12068150">
        <id>Q6NVU6</id>
        <label>UFSP1</label>
    </interactant>
    <organismsDiffer>false</organismsDiffer>
    <experiments>3</experiments>
</comment>
<comment type="interaction">
    <interactant intactId="EBI-12029004">
        <id>P78424</id>
    </interactant>
    <interactant intactId="EBI-12090999">
        <id>Q9UIW0</id>
        <label>VAX2</label>
    </interactant>
    <organismsDiffer>false</organismsDiffer>
    <experiments>3</experiments>
</comment>
<comment type="interaction">
    <interactant intactId="EBI-12029004">
        <id>P78424</id>
    </interactant>
    <interactant intactId="EBI-10191303">
        <id>O95231</id>
        <label>VENTX</label>
    </interactant>
    <organismsDiffer>false</organismsDiffer>
    <experiments>3</experiments>
</comment>
<comment type="interaction">
    <interactant intactId="EBI-12029004">
        <id>P78424</id>
    </interactant>
    <interactant intactId="EBI-11980193">
        <id>Q14119</id>
        <label>VEZF1</label>
    </interactant>
    <organismsDiffer>false</organismsDiffer>
    <experiments>3</experiments>
</comment>
<comment type="interaction">
    <interactant intactId="EBI-12029004">
        <id>P78424</id>
    </interactant>
    <interactant intactId="EBI-9031083">
        <id>Q9Y2B5</id>
        <label>VPS9D1</label>
    </interactant>
    <organismsDiffer>false</organismsDiffer>
    <experiments>3</experiments>
</comment>
<comment type="interaction">
    <interactant intactId="EBI-12029004">
        <id>P78424</id>
    </interactant>
    <interactant intactId="EBI-286683">
        <id>O43592</id>
        <label>XPOT</label>
    </interactant>
    <organismsDiffer>false</organismsDiffer>
    <experiments>3</experiments>
</comment>
<comment type="interaction">
    <interactant intactId="EBI-12029004">
        <id>P78424</id>
    </interactant>
    <interactant intactId="EBI-744471">
        <id>O43167</id>
        <label>ZBTB24</label>
    </interactant>
    <organismsDiffer>false</organismsDiffer>
    <experiments>3</experiments>
</comment>
<comment type="interaction">
    <interactant intactId="EBI-12029004">
        <id>P78424</id>
    </interactant>
    <interactant intactId="EBI-2564133">
        <id>Q9P1Z0</id>
        <label>ZBTB4</label>
    </interactant>
    <organismsDiffer>false</organismsDiffer>
    <experiments>3</experiments>
</comment>
<comment type="interaction">
    <interactant intactId="EBI-12029004">
        <id>P78424</id>
    </interactant>
    <interactant intactId="EBI-11994144">
        <id>A2RRC6</id>
        <label>ZFHX2</label>
    </interactant>
    <organismsDiffer>false</organismsDiffer>
    <experiments>3</experiments>
</comment>
<comment type="interaction">
    <interactant intactId="EBI-12029004">
        <id>P78424</id>
    </interactant>
    <interactant intactId="EBI-10237226">
        <id>Q15911-2</id>
        <label>ZFHX3</label>
    </interactant>
    <organismsDiffer>false</organismsDiffer>
    <experiments>3</experiments>
</comment>
<comment type="interaction">
    <interactant intactId="EBI-12029004">
        <id>P78424</id>
    </interactant>
    <interactant intactId="EBI-2555749">
        <id>Q6P2D0</id>
        <label>ZFP1</label>
    </interactant>
    <organismsDiffer>false</organismsDiffer>
    <experiments>3</experiments>
</comment>
<comment type="interaction">
    <interactant intactId="EBI-12029004">
        <id>P78424</id>
    </interactant>
    <interactant intactId="EBI-1052613">
        <id>Q96JP5</id>
        <label>ZFP91</label>
    </interactant>
    <organismsDiffer>false</organismsDiffer>
    <experiments>3</experiments>
</comment>
<comment type="interaction">
    <interactant intactId="EBI-12029004">
        <id>P78424</id>
    </interactant>
    <interactant intactId="EBI-11962760">
        <id>Q9NZV7</id>
        <label>ZIM2</label>
    </interactant>
    <organismsDiffer>false</organismsDiffer>
    <experiments>3</experiments>
</comment>
<comment type="interaction">
    <interactant intactId="EBI-12029004">
        <id>P78424</id>
    </interactant>
    <interactant intactId="EBI-12030590">
        <id>Q9H0C1</id>
        <label>ZMYND12</label>
    </interactant>
    <organismsDiffer>false</organismsDiffer>
    <experiments>3</experiments>
</comment>
<comment type="interaction">
    <interactant intactId="EBI-12029004">
        <id>P78424</id>
    </interactant>
    <interactant intactId="EBI-11742222">
        <id>Q9UQR1-2</id>
        <label>ZNF148</label>
    </interactant>
    <organismsDiffer>false</organismsDiffer>
    <experiments>3</experiments>
</comment>
<comment type="interaction">
    <interactant intactId="EBI-12029004">
        <id>P78424</id>
    </interactant>
    <interactant intactId="EBI-11993110">
        <id>Q9P2F9</id>
        <label>ZNF319</label>
    </interactant>
    <organismsDiffer>false</organismsDiffer>
    <experiments>3</experiments>
</comment>
<comment type="interaction">
    <interactant intactId="EBI-12029004">
        <id>P78424</id>
    </interactant>
    <interactant intactId="EBI-11741890">
        <id>Q86VK4-3</id>
        <label>ZNF410</label>
    </interactant>
    <organismsDiffer>false</organismsDiffer>
    <experiments>3</experiments>
</comment>
<comment type="interaction">
    <interactant intactId="EBI-12029004">
        <id>P78424</id>
    </interactant>
    <interactant intactId="EBI-17189720">
        <id>Q6ZN55-2</id>
        <label>ZNF574</label>
    </interactant>
    <organismsDiffer>false</organismsDiffer>
    <experiments>3</experiments>
</comment>
<comment type="subcellular location">
    <subcellularLocation>
        <location evidence="7">Nucleus</location>
    </subcellularLocation>
</comment>
<comment type="alternative products">
    <event type="alternative splicing"/>
    <isoform>
        <id>P78424-1</id>
        <name>1</name>
        <sequence type="displayed"/>
    </isoform>
    <isoform>
        <id>P78424-2</id>
        <name>2</name>
        <sequence type="described" ref="VSP_002336"/>
    </isoform>
</comment>
<comment type="tissue specificity">
    <text evidence="5">Expressed only within the CNS, where its expression is restricted to the medical habenulla, to a dispersed population of neurons in the dorsal hypothalamus, and to subsets of ganglion and amacrine cells in the retina.</text>
</comment>
<comment type="disease" evidence="4">
    <disease id="DI-01738">
        <name>Hereditary susceptibility to Wilms tumor 5</name>
        <acronym>WT5</acronym>
        <description>Pediatric malignancy of kidney and one of the most common solid cancers in childhood.</description>
        <dbReference type="MIM" id="601583"/>
    </disease>
    <text>The disease is caused by variants affecting the gene represented in this entry.</text>
</comment>
<comment type="miscellaneous">
    <molecule>Isoform 1</molecule>
    <text>Major isoform.</text>
</comment>
<comment type="similarity">
    <text evidence="7">Belongs to the POU transcription factor family. Class-6 subfamily.</text>
</comment>
<comment type="sequence caution" evidence="7">
    <conflict type="erroneous gene model prediction">
        <sequence resource="EMBL-CDS" id="AAB49727"/>
    </conflict>
</comment>
<comment type="sequence caution" evidence="7">
    <conflict type="erroneous initiation">
        <sequence resource="EMBL-CDS" id="AAB49728"/>
    </conflict>
    <text>Truncated N-terminus.</text>
</comment>
<comment type="sequence caution" evidence="7">
    <conflict type="erroneous initiation">
        <sequence resource="EMBL-CDS" id="AAS07475"/>
    </conflict>
    <text>Truncated N-terminus.</text>
</comment>
<comment type="sequence caution" evidence="7">
    <conflict type="erroneous gene model prediction">
        <sequence resource="EMBL-CDS" id="EAL23992"/>
    </conflict>
</comment>
<comment type="online information" name="Atlas of Genetics and Cytogenetics in Oncology and Haematology">
    <link uri="https://atlasgeneticsoncology.org/gene/42963/POU6F2"/>
</comment>
<feature type="chain" id="PRO_0000100762" description="POU domain, class 6, transcription factor 2">
    <location>
        <begin position="1"/>
        <end position="691"/>
    </location>
</feature>
<feature type="domain" description="POU-specific" evidence="2">
    <location>
        <begin position="476"/>
        <end position="586"/>
    </location>
</feature>
<feature type="DNA-binding region" description="Homeobox" evidence="1">
    <location>
        <begin position="607"/>
        <end position="666"/>
    </location>
</feature>
<feature type="region of interest" description="Disordered" evidence="3">
    <location>
        <begin position="25"/>
        <end position="93"/>
    </location>
</feature>
<feature type="region of interest" description="Disordered" evidence="3">
    <location>
        <begin position="186"/>
        <end position="297"/>
    </location>
</feature>
<feature type="region of interest" description="Disordered" evidence="3">
    <location>
        <begin position="435"/>
        <end position="461"/>
    </location>
</feature>
<feature type="compositionally biased region" description="Basic and acidic residues" evidence="3">
    <location>
        <begin position="25"/>
        <end position="36"/>
    </location>
</feature>
<feature type="compositionally biased region" description="Low complexity" evidence="3">
    <location>
        <begin position="186"/>
        <end position="195"/>
    </location>
</feature>
<feature type="compositionally biased region" description="Pro residues" evidence="3">
    <location>
        <begin position="196"/>
        <end position="210"/>
    </location>
</feature>
<feature type="compositionally biased region" description="Low complexity" evidence="3">
    <location>
        <begin position="211"/>
        <end position="220"/>
    </location>
</feature>
<feature type="compositionally biased region" description="Pro residues" evidence="3">
    <location>
        <begin position="221"/>
        <end position="238"/>
    </location>
</feature>
<feature type="compositionally biased region" description="Low complexity" evidence="3">
    <location>
        <begin position="239"/>
        <end position="280"/>
    </location>
</feature>
<feature type="compositionally biased region" description="Low complexity" evidence="3">
    <location>
        <begin position="438"/>
        <end position="461"/>
    </location>
</feature>
<feature type="splice variant" id="VSP_002336" description="In isoform 2." evidence="6">
    <location>
        <begin position="524"/>
        <end position="559"/>
    </location>
</feature>
<feature type="sequence variant" id="VAR_022419" description="In WT5." evidence="4">
    <original>Q</original>
    <variation>H</variation>
    <location>
        <position position="192"/>
    </location>
</feature>
<feature type="sequence variant" id="VAR_028410" description="In dbSNP:rs2074936.">
    <original>P</original>
    <variation>L</variation>
    <location>
        <position position="199"/>
    </location>
</feature>
<feature type="sequence variant" id="VAR_028411" description="In dbSNP:rs4992268.">
    <original>L</original>
    <variation>M</variation>
    <location>
        <position position="500"/>
    </location>
</feature>
<feature type="sequence variant" id="VAR_028412" description="In dbSNP:rs7804851.">
    <original>E</original>
    <variation>K</variation>
    <location>
        <position position="639"/>
    </location>
</feature>
<feature type="sequence conflict" description="In Ref. 1; AAB49727/AAB49728." evidence="7" ref="1">
    <original>Q</original>
    <variation>QQ</variation>
    <location>
        <position position="196"/>
    </location>
</feature>
<feature type="sequence conflict" description="In Ref. 1; AAB49727/AAB49728." evidence="7" ref="1">
    <original>Q</original>
    <variation>H</variation>
    <location>
        <position position="258"/>
    </location>
</feature>
<name>PO6F2_HUMAN</name>
<organism>
    <name type="scientific">Homo sapiens</name>
    <name type="common">Human</name>
    <dbReference type="NCBI Taxonomy" id="9606"/>
    <lineage>
        <taxon>Eukaryota</taxon>
        <taxon>Metazoa</taxon>
        <taxon>Chordata</taxon>
        <taxon>Craniata</taxon>
        <taxon>Vertebrata</taxon>
        <taxon>Euteleostomi</taxon>
        <taxon>Mammalia</taxon>
        <taxon>Eutheria</taxon>
        <taxon>Euarchontoglires</taxon>
        <taxon>Primates</taxon>
        <taxon>Haplorrhini</taxon>
        <taxon>Catarrhini</taxon>
        <taxon>Hominidae</taxon>
        <taxon>Homo</taxon>
    </lineage>
</organism>
<accession>P78424</accession>
<accession>A4D1W2</accession>
<accession>C4AMB9</accession>
<accession>P78425</accession>
<accession>Q75ME8</accession>
<accession>Q86UM6</accession>
<accession>Q9UDS7</accession>